<sequence>MALTGDLKSFSFADILQVLHHDKKSGVLIVEWPDITVAYYIKDGELVLARPVDKVFRVYVDRDFEKLIEKLRLNERTMAETIKKFFLSRLENKDGIFSFTQGFINYPENVPVAFPAEELIMEAARHLTLEETERKISDELLVFEKAPDWEVKVQRANLKEEERKVLELVNGENTVKDILEKSGLDKLTVYRTLYGLLAIGAIRRKRKKEIRKPTISLDLLTKLIEKIKKL</sequence>
<name>Y1845_AQUAE</name>
<keyword id="KW-1185">Reference proteome</keyword>
<gene>
    <name type="ordered locus">aq_1845</name>
</gene>
<proteinExistence type="predicted"/>
<dbReference type="EMBL" id="AE000657">
    <property type="protein sequence ID" value="AAC07667.1"/>
    <property type="molecule type" value="Genomic_DNA"/>
</dbReference>
<dbReference type="PIR" id="A70459">
    <property type="entry name" value="A70459"/>
</dbReference>
<dbReference type="RefSeq" id="NP_214267.1">
    <property type="nucleotide sequence ID" value="NC_000918.1"/>
</dbReference>
<dbReference type="RefSeq" id="WP_010881203.1">
    <property type="nucleotide sequence ID" value="NC_000918.1"/>
</dbReference>
<dbReference type="SMR" id="O67699"/>
<dbReference type="STRING" id="224324.aq_1845"/>
<dbReference type="EnsemblBacteria" id="AAC07667">
    <property type="protein sequence ID" value="AAC07667"/>
    <property type="gene ID" value="aq_1845"/>
</dbReference>
<dbReference type="KEGG" id="aae:aq_1845"/>
<dbReference type="eggNOG" id="COG0457">
    <property type="taxonomic scope" value="Bacteria"/>
</dbReference>
<dbReference type="HOGENOM" id="CLU_1199296_0_0_0"/>
<dbReference type="InParanoid" id="O67699"/>
<dbReference type="OrthoDB" id="11765at2"/>
<dbReference type="Proteomes" id="UP000000798">
    <property type="component" value="Chromosome"/>
</dbReference>
<dbReference type="Gene3D" id="1.10.10.10">
    <property type="entry name" value="Winged helix-like DNA-binding domain superfamily/Winged helix DNA-binding domain"/>
    <property type="match status" value="1"/>
</dbReference>
<dbReference type="InterPro" id="IPR025497">
    <property type="entry name" value="PatA-like_N"/>
</dbReference>
<dbReference type="InterPro" id="IPR002831">
    <property type="entry name" value="Tscrpt_reg_TrmB_N"/>
</dbReference>
<dbReference type="InterPro" id="IPR036388">
    <property type="entry name" value="WH-like_DNA-bd_sf"/>
</dbReference>
<dbReference type="InterPro" id="IPR036390">
    <property type="entry name" value="WH_DNA-bd_sf"/>
</dbReference>
<dbReference type="PANTHER" id="PTHR36304">
    <property type="entry name" value="DOMAIN GTPASE-ACTIVATING PROTEIN, PUTATIVE-RELATED-RELATED"/>
    <property type="match status" value="1"/>
</dbReference>
<dbReference type="PANTHER" id="PTHR36304:SF4">
    <property type="entry name" value="DUF4388 DOMAIN-CONTAINING PROTEIN"/>
    <property type="match status" value="1"/>
</dbReference>
<dbReference type="Pfam" id="PF14332">
    <property type="entry name" value="DUF4388"/>
    <property type="match status" value="1"/>
</dbReference>
<dbReference type="Pfam" id="PF01978">
    <property type="entry name" value="TrmB"/>
    <property type="match status" value="1"/>
</dbReference>
<dbReference type="SUPFAM" id="SSF46785">
    <property type="entry name" value="Winged helix' DNA-binding domain"/>
    <property type="match status" value="1"/>
</dbReference>
<organism>
    <name type="scientific">Aquifex aeolicus (strain VF5)</name>
    <dbReference type="NCBI Taxonomy" id="224324"/>
    <lineage>
        <taxon>Bacteria</taxon>
        <taxon>Pseudomonadati</taxon>
        <taxon>Aquificota</taxon>
        <taxon>Aquificia</taxon>
        <taxon>Aquificales</taxon>
        <taxon>Aquificaceae</taxon>
        <taxon>Aquifex</taxon>
    </lineage>
</organism>
<accession>O67699</accession>
<protein>
    <recommendedName>
        <fullName>Uncharacterized protein aq_1845</fullName>
    </recommendedName>
</protein>
<feature type="chain" id="PRO_0000186951" description="Uncharacterized protein aq_1845">
    <location>
        <begin position="1"/>
        <end position="230"/>
    </location>
</feature>
<reference key="1">
    <citation type="journal article" date="1998" name="Nature">
        <title>The complete genome of the hyperthermophilic bacterium Aquifex aeolicus.</title>
        <authorList>
            <person name="Deckert G."/>
            <person name="Warren P.V."/>
            <person name="Gaasterland T."/>
            <person name="Young W.G."/>
            <person name="Lenox A.L."/>
            <person name="Graham D.E."/>
            <person name="Overbeek R."/>
            <person name="Snead M.A."/>
            <person name="Keller M."/>
            <person name="Aujay M."/>
            <person name="Huber R."/>
            <person name="Feldman R.A."/>
            <person name="Short J.M."/>
            <person name="Olsen G.J."/>
            <person name="Swanson R.V."/>
        </authorList>
    </citation>
    <scope>NUCLEOTIDE SEQUENCE [LARGE SCALE GENOMIC DNA]</scope>
    <source>
        <strain>VF5</strain>
    </source>
</reference>